<dbReference type="EMBL" id="U20526">
    <property type="protein sequence ID" value="AAA74048.1"/>
    <property type="molecule type" value="Genomic_DNA"/>
</dbReference>
<dbReference type="EMBL" id="CU329670">
    <property type="protein sequence ID" value="CAC19733.1"/>
    <property type="molecule type" value="Genomic_DNA"/>
</dbReference>
<dbReference type="PIR" id="S63845">
    <property type="entry name" value="S63845"/>
</dbReference>
<dbReference type="RefSeq" id="NP_593623.1">
    <property type="nucleotide sequence ID" value="NM_001019054.2"/>
</dbReference>
<dbReference type="SMR" id="P49373"/>
<dbReference type="BioGRID" id="278428">
    <property type="interactions" value="160"/>
</dbReference>
<dbReference type="FunCoup" id="P49373">
    <property type="interactions" value="833"/>
</dbReference>
<dbReference type="STRING" id="284812.P49373"/>
<dbReference type="iPTMnet" id="P49373"/>
<dbReference type="PaxDb" id="4896-SPAC20H4.03c.1"/>
<dbReference type="EnsemblFungi" id="SPAC20H4.03c.1">
    <property type="protein sequence ID" value="SPAC20H4.03c.1:pep"/>
    <property type="gene ID" value="SPAC20H4.03c"/>
</dbReference>
<dbReference type="GeneID" id="2541941"/>
<dbReference type="KEGG" id="spo:2541941"/>
<dbReference type="PomBase" id="SPAC20H4.03c">
    <property type="gene designation" value="tfs1"/>
</dbReference>
<dbReference type="VEuPathDB" id="FungiDB:SPAC20H4.03c"/>
<dbReference type="eggNOG" id="KOG1105">
    <property type="taxonomic scope" value="Eukaryota"/>
</dbReference>
<dbReference type="HOGENOM" id="CLU_037637_1_1_1"/>
<dbReference type="InParanoid" id="P49373"/>
<dbReference type="OMA" id="RFVVMTH"/>
<dbReference type="PhylomeDB" id="P49373"/>
<dbReference type="Reactome" id="R-SPO-6781823">
    <property type="pathway name" value="Formation of TC-NER Pre-Incision Complex"/>
</dbReference>
<dbReference type="Reactome" id="R-SPO-6782135">
    <property type="pathway name" value="Dual incision in TC-NER"/>
</dbReference>
<dbReference type="Reactome" id="R-SPO-6782210">
    <property type="pathway name" value="Gap-filling DNA repair synthesis and ligation in TC-NER"/>
</dbReference>
<dbReference type="Reactome" id="R-SPO-6796648">
    <property type="pathway name" value="TP53 Regulates Transcription of DNA Repair Genes"/>
</dbReference>
<dbReference type="PRO" id="PR:P49373"/>
<dbReference type="Proteomes" id="UP000002485">
    <property type="component" value="Chromosome I"/>
</dbReference>
<dbReference type="GO" id="GO:0005737">
    <property type="term" value="C:cytoplasm"/>
    <property type="evidence" value="ECO:0000314"/>
    <property type="project" value="PomBase"/>
</dbReference>
<dbReference type="GO" id="GO:0005634">
    <property type="term" value="C:nucleus"/>
    <property type="evidence" value="ECO:0000314"/>
    <property type="project" value="PomBase"/>
</dbReference>
<dbReference type="GO" id="GO:0003677">
    <property type="term" value="F:DNA binding"/>
    <property type="evidence" value="ECO:0007669"/>
    <property type="project" value="UniProtKB-KW"/>
</dbReference>
<dbReference type="GO" id="GO:0003711">
    <property type="term" value="F:transcription elongation factor activity"/>
    <property type="evidence" value="ECO:0000303"/>
    <property type="project" value="PomBase"/>
</dbReference>
<dbReference type="GO" id="GO:0008270">
    <property type="term" value="F:zinc ion binding"/>
    <property type="evidence" value="ECO:0007669"/>
    <property type="project" value="UniProtKB-KW"/>
</dbReference>
<dbReference type="GO" id="GO:0006357">
    <property type="term" value="P:regulation of transcription by RNA polymerase II"/>
    <property type="evidence" value="ECO:0000318"/>
    <property type="project" value="GO_Central"/>
</dbReference>
<dbReference type="GO" id="GO:0006368">
    <property type="term" value="P:transcription elongation by RNA polymerase II"/>
    <property type="evidence" value="ECO:0000266"/>
    <property type="project" value="PomBase"/>
</dbReference>
<dbReference type="CDD" id="cd00183">
    <property type="entry name" value="TFIIS_I"/>
    <property type="match status" value="1"/>
</dbReference>
<dbReference type="CDD" id="cd13749">
    <property type="entry name" value="Zn-ribbon_TFIIS"/>
    <property type="match status" value="1"/>
</dbReference>
<dbReference type="FunFam" id="2.20.25.10:FF:000001">
    <property type="entry name" value="Probable Transcription elongation factor S-II"/>
    <property type="match status" value="1"/>
</dbReference>
<dbReference type="FunFam" id="1.10.472.30:FF:000003">
    <property type="entry name" value="Transcription elongation factor S-II"/>
    <property type="match status" value="1"/>
</dbReference>
<dbReference type="FunFam" id="1.20.930.10:FF:000007">
    <property type="entry name" value="Transcription elongation factor S-II"/>
    <property type="match status" value="1"/>
</dbReference>
<dbReference type="Gene3D" id="2.20.25.10">
    <property type="match status" value="1"/>
</dbReference>
<dbReference type="Gene3D" id="1.20.930.10">
    <property type="entry name" value="Conserved domain common to transcription factors TFIIS, elongin A, CRSP70"/>
    <property type="match status" value="1"/>
</dbReference>
<dbReference type="Gene3D" id="1.10.472.30">
    <property type="entry name" value="Transcription elongation factor S-II, central domain"/>
    <property type="match status" value="1"/>
</dbReference>
<dbReference type="InterPro" id="IPR035100">
    <property type="entry name" value="TF_IIS-typ"/>
</dbReference>
<dbReference type="InterPro" id="IPR003617">
    <property type="entry name" value="TFIIS/CRSP70_N_sub"/>
</dbReference>
<dbReference type="InterPro" id="IPR035441">
    <property type="entry name" value="TFIIS/LEDGF_dom_sf"/>
</dbReference>
<dbReference type="InterPro" id="IPR003618">
    <property type="entry name" value="TFIIS_cen_dom"/>
</dbReference>
<dbReference type="InterPro" id="IPR036575">
    <property type="entry name" value="TFIIS_cen_dom_sf"/>
</dbReference>
<dbReference type="InterPro" id="IPR017923">
    <property type="entry name" value="TFIIS_N"/>
</dbReference>
<dbReference type="InterPro" id="IPR006289">
    <property type="entry name" value="TFSII"/>
</dbReference>
<dbReference type="InterPro" id="IPR001222">
    <property type="entry name" value="Znf_TFIIS"/>
</dbReference>
<dbReference type="NCBIfam" id="TIGR01385">
    <property type="entry name" value="TFSII"/>
    <property type="match status" value="1"/>
</dbReference>
<dbReference type="PANTHER" id="PTHR11477:SF0">
    <property type="entry name" value="IP08861P-RELATED"/>
    <property type="match status" value="1"/>
</dbReference>
<dbReference type="PANTHER" id="PTHR11477">
    <property type="entry name" value="TRANSCRIPTION FACTOR S-II ZINC FINGER DOMAIN-CONTAINING PROTEIN"/>
    <property type="match status" value="1"/>
</dbReference>
<dbReference type="Pfam" id="PF08711">
    <property type="entry name" value="Med26"/>
    <property type="match status" value="1"/>
</dbReference>
<dbReference type="Pfam" id="PF07500">
    <property type="entry name" value="TFIIS_M"/>
    <property type="match status" value="1"/>
</dbReference>
<dbReference type="Pfam" id="PF01096">
    <property type="entry name" value="Zn_ribbon_TFIIS"/>
    <property type="match status" value="1"/>
</dbReference>
<dbReference type="PIRSF" id="PIRSF006704">
    <property type="entry name" value="TF_IIS"/>
    <property type="match status" value="1"/>
</dbReference>
<dbReference type="SMART" id="SM00510">
    <property type="entry name" value="TFS2M"/>
    <property type="match status" value="1"/>
</dbReference>
<dbReference type="SMART" id="SM00509">
    <property type="entry name" value="TFS2N"/>
    <property type="match status" value="1"/>
</dbReference>
<dbReference type="SMART" id="SM00440">
    <property type="entry name" value="ZnF_C2C2"/>
    <property type="match status" value="1"/>
</dbReference>
<dbReference type="SUPFAM" id="SSF47676">
    <property type="entry name" value="Conserved domain common to transcription factors TFIIS, elongin A, CRSP70"/>
    <property type="match status" value="1"/>
</dbReference>
<dbReference type="SUPFAM" id="SSF46942">
    <property type="entry name" value="Elongation factor TFIIS domain 2"/>
    <property type="match status" value="1"/>
</dbReference>
<dbReference type="SUPFAM" id="SSF57783">
    <property type="entry name" value="Zinc beta-ribbon"/>
    <property type="match status" value="1"/>
</dbReference>
<dbReference type="PROSITE" id="PS51321">
    <property type="entry name" value="TFIIS_CENTRAL"/>
    <property type="match status" value="1"/>
</dbReference>
<dbReference type="PROSITE" id="PS51319">
    <property type="entry name" value="TFIIS_N"/>
    <property type="match status" value="1"/>
</dbReference>
<dbReference type="PROSITE" id="PS00466">
    <property type="entry name" value="ZF_TFIIS_1"/>
    <property type="match status" value="1"/>
</dbReference>
<dbReference type="PROSITE" id="PS51133">
    <property type="entry name" value="ZF_TFIIS_2"/>
    <property type="match status" value="1"/>
</dbReference>
<comment type="function">
    <text evidence="1">Necessary for efficient RNA polymerase II transcription elongation past template-encoded arresting sites. The arresting sites in DNA have the property of trapping a certain fraction of elongating RNA polymerases that pass through, resulting in locked ternary complexes. Cleavage of the nascent transcript by S-II allows the resumption of elongation from the new 3'-terminus (By similarity).</text>
</comment>
<comment type="subcellular location">
    <subcellularLocation>
        <location evidence="3 4">Nucleus</location>
    </subcellularLocation>
</comment>
<comment type="similarity">
    <text evidence="6">Belongs to the TFS-II family.</text>
</comment>
<name>TFS2_SCHPO</name>
<keyword id="KW-0238">DNA-binding</keyword>
<keyword id="KW-0479">Metal-binding</keyword>
<keyword id="KW-0539">Nucleus</keyword>
<keyword id="KW-1185">Reference proteome</keyword>
<keyword id="KW-0804">Transcription</keyword>
<keyword id="KW-0805">Transcription regulation</keyword>
<keyword id="KW-0862">Zinc</keyword>
<keyword id="KW-0863">Zinc-finger</keyword>
<protein>
    <recommendedName>
        <fullName>Transcription elongation factor S-II</fullName>
    </recommendedName>
    <alternativeName>
        <fullName>TFIIS</fullName>
    </alternativeName>
</protein>
<sequence>MDSADIRSAKAALEKAIQGKNIETIINIMTRLKNEVVATEELLKETRLGLVVGKLRSHPNEKVGEQAREIVKKWKADVSKGRPLKTTTTTSSTPSKHADVGSQAQKQVQKQSSSGQRTFKSDNVNVNVTDDKIRNNCIGLMYNALVIDSDESSSLIIAKAKEIDAQVLARAAGKTGSEYRNRMRSLYMNLKDKNNPKLRASVLRNEITPQRLSTMTSAELASEDRRKEDAKLEQENLFHAQGAKPQKAVTDLFTCGKCKQKKVSYYQMQTRSADEPMTTFCECTVCGNRWKFS</sequence>
<reference key="1">
    <citation type="journal article" date="1996" name="Yeast">
        <title>Isolation and characterization of the Schizosaccharomyces pombe gene encoding transcript elongation factor TFIIS.</title>
        <authorList>
            <person name="Williams L.A."/>
            <person name="Kane C.M."/>
        </authorList>
    </citation>
    <scope>NUCLEOTIDE SEQUENCE [GENOMIC DNA]</scope>
</reference>
<reference key="2">
    <citation type="journal article" date="2002" name="Nature">
        <title>The genome sequence of Schizosaccharomyces pombe.</title>
        <authorList>
            <person name="Wood V."/>
            <person name="Gwilliam R."/>
            <person name="Rajandream M.A."/>
            <person name="Lyne M.H."/>
            <person name="Lyne R."/>
            <person name="Stewart A."/>
            <person name="Sgouros J.G."/>
            <person name="Peat N."/>
            <person name="Hayles J."/>
            <person name="Baker S.G."/>
            <person name="Basham D."/>
            <person name="Bowman S."/>
            <person name="Brooks K."/>
            <person name="Brown D."/>
            <person name="Brown S."/>
            <person name="Chillingworth T."/>
            <person name="Churcher C.M."/>
            <person name="Collins M."/>
            <person name="Connor R."/>
            <person name="Cronin A."/>
            <person name="Davis P."/>
            <person name="Feltwell T."/>
            <person name="Fraser A."/>
            <person name="Gentles S."/>
            <person name="Goble A."/>
            <person name="Hamlin N."/>
            <person name="Harris D.E."/>
            <person name="Hidalgo J."/>
            <person name="Hodgson G."/>
            <person name="Holroyd S."/>
            <person name="Hornsby T."/>
            <person name="Howarth S."/>
            <person name="Huckle E.J."/>
            <person name="Hunt S."/>
            <person name="Jagels K."/>
            <person name="James K.D."/>
            <person name="Jones L."/>
            <person name="Jones M."/>
            <person name="Leather S."/>
            <person name="McDonald S."/>
            <person name="McLean J."/>
            <person name="Mooney P."/>
            <person name="Moule S."/>
            <person name="Mungall K.L."/>
            <person name="Murphy L.D."/>
            <person name="Niblett D."/>
            <person name="Odell C."/>
            <person name="Oliver K."/>
            <person name="O'Neil S."/>
            <person name="Pearson D."/>
            <person name="Quail M.A."/>
            <person name="Rabbinowitsch E."/>
            <person name="Rutherford K.M."/>
            <person name="Rutter S."/>
            <person name="Saunders D."/>
            <person name="Seeger K."/>
            <person name="Sharp S."/>
            <person name="Skelton J."/>
            <person name="Simmonds M.N."/>
            <person name="Squares R."/>
            <person name="Squares S."/>
            <person name="Stevens K."/>
            <person name="Taylor K."/>
            <person name="Taylor R.G."/>
            <person name="Tivey A."/>
            <person name="Walsh S.V."/>
            <person name="Warren T."/>
            <person name="Whitehead S."/>
            <person name="Woodward J.R."/>
            <person name="Volckaert G."/>
            <person name="Aert R."/>
            <person name="Robben J."/>
            <person name="Grymonprez B."/>
            <person name="Weltjens I."/>
            <person name="Vanstreels E."/>
            <person name="Rieger M."/>
            <person name="Schaefer M."/>
            <person name="Mueller-Auer S."/>
            <person name="Gabel C."/>
            <person name="Fuchs M."/>
            <person name="Duesterhoeft A."/>
            <person name="Fritzc C."/>
            <person name="Holzer E."/>
            <person name="Moestl D."/>
            <person name="Hilbert H."/>
            <person name="Borzym K."/>
            <person name="Langer I."/>
            <person name="Beck A."/>
            <person name="Lehrach H."/>
            <person name="Reinhardt R."/>
            <person name="Pohl T.M."/>
            <person name="Eger P."/>
            <person name="Zimmermann W."/>
            <person name="Wedler H."/>
            <person name="Wambutt R."/>
            <person name="Purnelle B."/>
            <person name="Goffeau A."/>
            <person name="Cadieu E."/>
            <person name="Dreano S."/>
            <person name="Gloux S."/>
            <person name="Lelaure V."/>
            <person name="Mottier S."/>
            <person name="Galibert F."/>
            <person name="Aves S.J."/>
            <person name="Xiang Z."/>
            <person name="Hunt C."/>
            <person name="Moore K."/>
            <person name="Hurst S.M."/>
            <person name="Lucas M."/>
            <person name="Rochet M."/>
            <person name="Gaillardin C."/>
            <person name="Tallada V.A."/>
            <person name="Garzon A."/>
            <person name="Thode G."/>
            <person name="Daga R.R."/>
            <person name="Cruzado L."/>
            <person name="Jimenez J."/>
            <person name="Sanchez M."/>
            <person name="del Rey F."/>
            <person name="Benito J."/>
            <person name="Dominguez A."/>
            <person name="Revuelta J.L."/>
            <person name="Moreno S."/>
            <person name="Armstrong J."/>
            <person name="Forsburg S.L."/>
            <person name="Cerutti L."/>
            <person name="Lowe T."/>
            <person name="McCombie W.R."/>
            <person name="Paulsen I."/>
            <person name="Potashkin J."/>
            <person name="Shpakovski G.V."/>
            <person name="Ussery D."/>
            <person name="Barrell B.G."/>
            <person name="Nurse P."/>
        </authorList>
    </citation>
    <scope>NUCLEOTIDE SEQUENCE [LARGE SCALE GENOMIC DNA]</scope>
    <source>
        <strain>972 / ATCC 24843</strain>
    </source>
</reference>
<gene>
    <name type="primary">tfs1</name>
    <name type="ORF">SPAC20H4.03c</name>
</gene>
<feature type="chain" id="PRO_0000121442" description="Transcription elongation factor S-II">
    <location>
        <begin position="1"/>
        <end position="293"/>
    </location>
</feature>
<feature type="domain" description="TFIIS N-terminal" evidence="3">
    <location>
        <begin position="4"/>
        <end position="81"/>
    </location>
</feature>
<feature type="domain" description="TFIIS central" evidence="4">
    <location>
        <begin position="133"/>
        <end position="248"/>
    </location>
</feature>
<feature type="zinc finger region" description="TFIIS-type" evidence="2">
    <location>
        <begin position="251"/>
        <end position="291"/>
    </location>
</feature>
<feature type="region of interest" description="Disordered" evidence="5">
    <location>
        <begin position="81"/>
        <end position="123"/>
    </location>
</feature>
<feature type="compositionally biased region" description="Low complexity" evidence="5">
    <location>
        <begin position="100"/>
        <end position="116"/>
    </location>
</feature>
<feature type="binding site" evidence="2">
    <location>
        <position position="255"/>
    </location>
    <ligand>
        <name>Zn(2+)</name>
        <dbReference type="ChEBI" id="CHEBI:29105"/>
    </ligand>
</feature>
<feature type="binding site" evidence="2">
    <location>
        <position position="258"/>
    </location>
    <ligand>
        <name>Zn(2+)</name>
        <dbReference type="ChEBI" id="CHEBI:29105"/>
    </ligand>
</feature>
<feature type="binding site" evidence="2">
    <location>
        <position position="283"/>
    </location>
    <ligand>
        <name>Zn(2+)</name>
        <dbReference type="ChEBI" id="CHEBI:29105"/>
    </ligand>
</feature>
<feature type="binding site" evidence="2">
    <location>
        <position position="286"/>
    </location>
    <ligand>
        <name>Zn(2+)</name>
        <dbReference type="ChEBI" id="CHEBI:29105"/>
    </ligand>
</feature>
<organism>
    <name type="scientific">Schizosaccharomyces pombe (strain 972 / ATCC 24843)</name>
    <name type="common">Fission yeast</name>
    <dbReference type="NCBI Taxonomy" id="284812"/>
    <lineage>
        <taxon>Eukaryota</taxon>
        <taxon>Fungi</taxon>
        <taxon>Dikarya</taxon>
        <taxon>Ascomycota</taxon>
        <taxon>Taphrinomycotina</taxon>
        <taxon>Schizosaccharomycetes</taxon>
        <taxon>Schizosaccharomycetales</taxon>
        <taxon>Schizosaccharomycetaceae</taxon>
        <taxon>Schizosaccharomyces</taxon>
    </lineage>
</organism>
<accession>P49373</accession>
<evidence type="ECO:0000250" key="1"/>
<evidence type="ECO:0000255" key="2">
    <source>
        <dbReference type="PROSITE-ProRule" id="PRU00472"/>
    </source>
</evidence>
<evidence type="ECO:0000255" key="3">
    <source>
        <dbReference type="PROSITE-ProRule" id="PRU00649"/>
    </source>
</evidence>
<evidence type="ECO:0000255" key="4">
    <source>
        <dbReference type="PROSITE-ProRule" id="PRU00651"/>
    </source>
</evidence>
<evidence type="ECO:0000256" key="5">
    <source>
        <dbReference type="SAM" id="MobiDB-lite"/>
    </source>
</evidence>
<evidence type="ECO:0000305" key="6"/>
<proteinExistence type="inferred from homology"/>